<sequence>MGDARDNEAYEEELLDYEEEDEKVPDSGNKVNGEAVKKGYVGIHSSGFRDFLLKPELLRAIVDSGFEHPSEVQHECIPQAILGMDVICQAKSGMGKTAVFVLSTLQQIEPSPGQVSALVLCHTRELAYQICNEFVRFSTYLPDTKVSVFYGGVNIKIHKDLLKNECPHIVVGTPGRVLALAREKDLSLKNVRHFILDECDKMLESLDMRRDVQEIFKMTPHDKQVMMFSATLSKEIRPVCKKFMQDPMEIYVDDEAKLTLHGLVQHYIKLSEMEKNRKLNDLLDALDFNQVVIFVKSVSRAAELNKLLVECNFPSICIHSGMSQEERLTRYKSFKEGHKRILVATDLVGRGIDIERVNIVINYDMPDSADTYLHRVGRAGRFGTKGLAITFVASASDSEVLNQVQERFEVDIKELPEQIDTSTYMPS</sequence>
<feature type="chain" id="PRO_0000239157" description="DEAD-box ATP-dependent RNA helicase 15">
    <location>
        <begin position="1"/>
        <end position="427"/>
    </location>
</feature>
<feature type="domain" description="Helicase ATP-binding" evidence="1">
    <location>
        <begin position="77"/>
        <end position="250"/>
    </location>
</feature>
<feature type="domain" description="Helicase C-terminal" evidence="2">
    <location>
        <begin position="278"/>
        <end position="423"/>
    </location>
</feature>
<feature type="region of interest" description="Disordered" evidence="3">
    <location>
        <begin position="1"/>
        <end position="30"/>
    </location>
</feature>
<feature type="short sequence motif" description="Q motif">
    <location>
        <begin position="46"/>
        <end position="74"/>
    </location>
</feature>
<feature type="short sequence motif" description="DEAD box">
    <location>
        <begin position="197"/>
        <end position="200"/>
    </location>
</feature>
<feature type="compositionally biased region" description="Acidic residues" evidence="3">
    <location>
        <begin position="9"/>
        <end position="23"/>
    </location>
</feature>
<feature type="binding site" evidence="1">
    <location>
        <begin position="90"/>
        <end position="97"/>
    </location>
    <ligand>
        <name>ATP</name>
        <dbReference type="ChEBI" id="CHEBI:30616"/>
    </ligand>
</feature>
<feature type="splice variant" id="VSP_019099" description="In isoform 2." evidence="7">
    <location>
        <begin position="1"/>
        <end position="215"/>
    </location>
</feature>
<feature type="splice variant" id="VSP_019100" description="In isoform 3." evidence="6 7">
    <location>
        <begin position="1"/>
        <end position="83"/>
    </location>
</feature>
<feature type="splice variant" id="VSP_019101" description="In isoform 2." evidence="7">
    <original>FKMTPHDKQVMMFSATLSKEIRPVCKKFMQD</original>
    <variation>MFRAISLYHSKTHIYEENLVDEDLRSG</variation>
    <location>
        <begin position="216"/>
        <end position="246"/>
    </location>
</feature>
<feature type="splice variant" id="VSP_019102" description="In isoform 3." evidence="6 7">
    <original>PMEIYVDDEAKLTL</original>
    <variation>VMFHGQFSLPLQVF</variation>
    <location>
        <begin position="247"/>
        <end position="260"/>
    </location>
</feature>
<feature type="splice variant" id="VSP_019103" description="In isoform 3." evidence="6 7">
    <location>
        <begin position="261"/>
        <end position="427"/>
    </location>
</feature>
<feature type="sequence conflict" description="In Ref. 5; BAD95431." evidence="8" ref="5">
    <original>I</original>
    <variation>V</variation>
    <location>
        <position position="108"/>
    </location>
</feature>
<feature type="sequence conflict" description="In Ref. 2; CAB96652." evidence="8" ref="2">
    <original>N</original>
    <variation>T</variation>
    <location>
        <position position="276"/>
    </location>
</feature>
<feature type="sequence conflict" description="In Ref. 1; CAA09205." evidence="8" ref="1">
    <original>A</original>
    <variation>D</variation>
    <location>
        <position position="302"/>
    </location>
</feature>
<feature type="sequence conflict" description="In Ref. 1; CAA09205." evidence="8" ref="1">
    <original>ECN</original>
    <variation>GCH</variation>
    <location>
        <begin position="310"/>
        <end position="312"/>
    </location>
</feature>
<protein>
    <recommendedName>
        <fullName>DEAD-box ATP-dependent RNA helicase 15</fullName>
        <ecNumber evidence="5">3.6.4.13</ecNumber>
    </recommendedName>
    <alternativeName>
        <fullName>UAP56 homolog A</fullName>
    </alternativeName>
</protein>
<proteinExistence type="evidence at protein level"/>
<keyword id="KW-0025">Alternative splicing</keyword>
<keyword id="KW-0067">ATP-binding</keyword>
<keyword id="KW-0347">Helicase</keyword>
<keyword id="KW-0378">Hydrolase</keyword>
<keyword id="KW-0507">mRNA processing</keyword>
<keyword id="KW-0508">mRNA splicing</keyword>
<keyword id="KW-0509">mRNA transport</keyword>
<keyword id="KW-0547">Nucleotide-binding</keyword>
<keyword id="KW-0539">Nucleus</keyword>
<keyword id="KW-1185">Reference proteome</keyword>
<keyword id="KW-0694">RNA-binding</keyword>
<keyword id="KW-0813">Transport</keyword>
<comment type="function">
    <text evidence="5">ATP-dependent RNA helicase involved in pre-mRNA splicing. Required for the export of mRNA out of the nucleus. In addition to ssRNA and dsRNA, binds dsDNA, but not ssDNA.</text>
</comment>
<comment type="catalytic activity">
    <reaction evidence="5">
        <text>ATP + H2O = ADP + phosphate + H(+)</text>
        <dbReference type="Rhea" id="RHEA:13065"/>
        <dbReference type="ChEBI" id="CHEBI:15377"/>
        <dbReference type="ChEBI" id="CHEBI:15378"/>
        <dbReference type="ChEBI" id="CHEBI:30616"/>
        <dbReference type="ChEBI" id="CHEBI:43474"/>
        <dbReference type="ChEBI" id="CHEBI:456216"/>
        <dbReference type="EC" id="3.6.4.13"/>
    </reaction>
    <physiologicalReaction direction="left-to-right" evidence="9">
        <dbReference type="Rhea" id="RHEA:13066"/>
    </physiologicalReaction>
</comment>
<comment type="subunit">
    <text evidence="5">Interacts with ALY2 and MOS11.</text>
</comment>
<comment type="subcellular location">
    <subcellularLocation>
        <location evidence="4 5">Nucleus</location>
    </subcellularLocation>
    <text>Localizes predominantly to euchromatic regions of the nucleoplasm.</text>
</comment>
<comment type="alternative products">
    <event type="alternative splicing"/>
    <isoform>
        <id>Q56XG6-1</id>
        <name>1</name>
        <sequence type="displayed"/>
    </isoform>
    <isoform>
        <id>Q56XG6-2</id>
        <name>2</name>
        <sequence type="described" ref="VSP_019099 VSP_019101"/>
    </isoform>
    <isoform>
        <id>Q56XG6-3</id>
        <name>3</name>
        <sequence type="described" ref="VSP_019100 VSP_019102 VSP_019103"/>
    </isoform>
</comment>
<comment type="domain">
    <text>The Q motif is unique to and characteristic of the DEAD box family of RNA helicases and controls ATP binding and hydrolysis.</text>
</comment>
<comment type="miscellaneous">
    <molecule>Isoform 2</molecule>
    <text evidence="8">May be due to intron retention.</text>
</comment>
<comment type="miscellaneous">
    <molecule>Isoform 3</molecule>
    <text evidence="8">May be due to intron retention.</text>
</comment>
<comment type="similarity">
    <text evidence="8">Belongs to the DEAD box helicase family. DECD subfamily.</text>
</comment>
<comment type="sequence caution" evidence="8">
    <conflict type="erroneous initiation">
        <sequence resource="EMBL-CDS" id="CAA09205"/>
    </conflict>
</comment>
<comment type="sequence caution" evidence="8">
    <conflict type="erroneous gene model prediction">
        <sequence resource="EMBL-CDS" id="CAB96652"/>
    </conflict>
</comment>
<gene>
    <name type="primary">RH15</name>
    <name type="synonym">UAP56A</name>
    <name type="ordered locus">At5g11170</name>
    <name type="ORF">F2I11.60</name>
</gene>
<name>RH15_ARATH</name>
<dbReference type="EC" id="3.6.4.13" evidence="5"/>
<dbReference type="EMBL" id="AJ010466">
    <property type="protein sequence ID" value="CAA09205.1"/>
    <property type="status" value="ALT_INIT"/>
    <property type="molecule type" value="mRNA"/>
</dbReference>
<dbReference type="EMBL" id="AL360314">
    <property type="protein sequence ID" value="CAB96652.1"/>
    <property type="status" value="ALT_SEQ"/>
    <property type="molecule type" value="Genomic_DNA"/>
</dbReference>
<dbReference type="EMBL" id="CP002688">
    <property type="protein sequence ID" value="AED91642.1"/>
    <property type="molecule type" value="Genomic_DNA"/>
</dbReference>
<dbReference type="EMBL" id="AY052303">
    <property type="protein sequence ID" value="AAK96496.1"/>
    <property type="molecule type" value="mRNA"/>
</dbReference>
<dbReference type="EMBL" id="BT001052">
    <property type="protein sequence ID" value="AAN46806.1"/>
    <property type="molecule type" value="mRNA"/>
</dbReference>
<dbReference type="EMBL" id="AK221273">
    <property type="protein sequence ID" value="BAD93957.1"/>
    <property type="molecule type" value="mRNA"/>
</dbReference>
<dbReference type="EMBL" id="AK221708">
    <property type="protein sequence ID" value="BAD95431.1"/>
    <property type="molecule type" value="mRNA"/>
</dbReference>
<dbReference type="EMBL" id="AK226428">
    <property type="protein sequence ID" value="BAE98572.1"/>
    <property type="molecule type" value="mRNA"/>
</dbReference>
<dbReference type="EMBL" id="AK319088">
    <property type="protein sequence ID" value="BAH57203.1"/>
    <property type="molecule type" value="mRNA"/>
</dbReference>
<dbReference type="PIR" id="T51343">
    <property type="entry name" value="T51343"/>
</dbReference>
<dbReference type="RefSeq" id="NP_568244.2">
    <molecule id="Q56XG6-1"/>
    <property type="nucleotide sequence ID" value="NM_121155.4"/>
</dbReference>
<dbReference type="RefSeq" id="NP_568245.1">
    <molecule id="Q56XG6-1"/>
    <property type="nucleotide sequence ID" value="NM_121158.4"/>
</dbReference>
<dbReference type="SMR" id="Q56XG6"/>
<dbReference type="BioGRID" id="16264">
    <property type="interactions" value="12"/>
</dbReference>
<dbReference type="BioGRID" id="16268">
    <property type="interactions" value="12"/>
</dbReference>
<dbReference type="FunCoup" id="Q56XG6">
    <property type="interactions" value="4707"/>
</dbReference>
<dbReference type="IntAct" id="Q56XG6">
    <property type="interactions" value="2"/>
</dbReference>
<dbReference type="STRING" id="3702.Q56XG6"/>
<dbReference type="iPTMnet" id="Q56XG6"/>
<dbReference type="PaxDb" id="3702-AT5G11170.1"/>
<dbReference type="EnsemblPlants" id="AT5G11170.1">
    <molecule id="Q56XG6-1"/>
    <property type="protein sequence ID" value="AT5G11170.1"/>
    <property type="gene ID" value="AT5G11170"/>
</dbReference>
<dbReference type="EnsemblPlants" id="AT5G11200.1">
    <molecule id="Q56XG6-1"/>
    <property type="protein sequence ID" value="AT5G11200.1"/>
    <property type="gene ID" value="AT5G11200"/>
</dbReference>
<dbReference type="GeneID" id="830986"/>
<dbReference type="Gramene" id="AT5G11170.1">
    <molecule id="Q56XG6-1"/>
    <property type="protein sequence ID" value="AT5G11170.1"/>
    <property type="gene ID" value="AT5G11170"/>
</dbReference>
<dbReference type="Gramene" id="AT5G11200.1">
    <molecule id="Q56XG6-1"/>
    <property type="protein sequence ID" value="AT5G11200.1"/>
    <property type="gene ID" value="AT5G11200"/>
</dbReference>
<dbReference type="KEGG" id="ath:AT5G11170"/>
<dbReference type="KEGG" id="ath:AT5G11200"/>
<dbReference type="Araport" id="AT5G11170"/>
<dbReference type="TAIR" id="AT5G11170">
    <property type="gene designation" value="UAP56A"/>
</dbReference>
<dbReference type="eggNOG" id="KOG0329">
    <property type="taxonomic scope" value="Eukaryota"/>
</dbReference>
<dbReference type="HOGENOM" id="CLU_003041_1_0_1"/>
<dbReference type="InParanoid" id="Q56XG6"/>
<dbReference type="OMA" id="SWHILED"/>
<dbReference type="OrthoDB" id="1625029at2759"/>
<dbReference type="PhylomeDB" id="Q56XG6"/>
<dbReference type="PRO" id="PR:Q56XG6"/>
<dbReference type="Proteomes" id="UP000006548">
    <property type="component" value="Chromosome 5"/>
</dbReference>
<dbReference type="ExpressionAtlas" id="Q56XG6">
    <property type="expression patterns" value="baseline and differential"/>
</dbReference>
<dbReference type="GO" id="GO:0005829">
    <property type="term" value="C:cytosol"/>
    <property type="evidence" value="ECO:0007005"/>
    <property type="project" value="TAIR"/>
</dbReference>
<dbReference type="GO" id="GO:0005730">
    <property type="term" value="C:nucleolus"/>
    <property type="evidence" value="ECO:0007005"/>
    <property type="project" value="TAIR"/>
</dbReference>
<dbReference type="GO" id="GO:0005634">
    <property type="term" value="C:nucleus"/>
    <property type="evidence" value="ECO:0000314"/>
    <property type="project" value="TAIR"/>
</dbReference>
<dbReference type="GO" id="GO:0009506">
    <property type="term" value="C:plasmodesma"/>
    <property type="evidence" value="ECO:0007005"/>
    <property type="project" value="TAIR"/>
</dbReference>
<dbReference type="GO" id="GO:0005524">
    <property type="term" value="F:ATP binding"/>
    <property type="evidence" value="ECO:0007669"/>
    <property type="project" value="UniProtKB-KW"/>
</dbReference>
<dbReference type="GO" id="GO:0016887">
    <property type="term" value="F:ATP hydrolysis activity"/>
    <property type="evidence" value="ECO:0000314"/>
    <property type="project" value="TAIR"/>
</dbReference>
<dbReference type="GO" id="GO:0003690">
    <property type="term" value="F:double-stranded DNA binding"/>
    <property type="evidence" value="ECO:0000314"/>
    <property type="project" value="TAIR"/>
</dbReference>
<dbReference type="GO" id="GO:0003725">
    <property type="term" value="F:double-stranded RNA binding"/>
    <property type="evidence" value="ECO:0000314"/>
    <property type="project" value="TAIR"/>
</dbReference>
<dbReference type="GO" id="GO:0003729">
    <property type="term" value="F:mRNA binding"/>
    <property type="evidence" value="ECO:0000314"/>
    <property type="project" value="TAIR"/>
</dbReference>
<dbReference type="GO" id="GO:0003724">
    <property type="term" value="F:RNA helicase activity"/>
    <property type="evidence" value="ECO:0000314"/>
    <property type="project" value="TAIR"/>
</dbReference>
<dbReference type="GO" id="GO:0003727">
    <property type="term" value="F:single-stranded RNA binding"/>
    <property type="evidence" value="ECO:0000314"/>
    <property type="project" value="TAIR"/>
</dbReference>
<dbReference type="GO" id="GO:0006397">
    <property type="term" value="P:mRNA processing"/>
    <property type="evidence" value="ECO:0007669"/>
    <property type="project" value="UniProtKB-KW"/>
</dbReference>
<dbReference type="GO" id="GO:0051028">
    <property type="term" value="P:mRNA transport"/>
    <property type="evidence" value="ECO:0007669"/>
    <property type="project" value="UniProtKB-KW"/>
</dbReference>
<dbReference type="GO" id="GO:0046686">
    <property type="term" value="P:response to cadmium ion"/>
    <property type="evidence" value="ECO:0000270"/>
    <property type="project" value="TAIR"/>
</dbReference>
<dbReference type="GO" id="GO:0008380">
    <property type="term" value="P:RNA splicing"/>
    <property type="evidence" value="ECO:0007669"/>
    <property type="project" value="UniProtKB-KW"/>
</dbReference>
<dbReference type="CDD" id="cd17950">
    <property type="entry name" value="DEADc_DDX39"/>
    <property type="match status" value="1"/>
</dbReference>
<dbReference type="CDD" id="cd18787">
    <property type="entry name" value="SF2_C_DEAD"/>
    <property type="match status" value="1"/>
</dbReference>
<dbReference type="FunFam" id="3.40.50.300:FF:000111">
    <property type="entry name" value="DEAD-box ATP-dependent RNA helicase"/>
    <property type="match status" value="1"/>
</dbReference>
<dbReference type="FunFam" id="3.40.50.300:FF:000168">
    <property type="entry name" value="DEAD-box ATP-dependent RNA helicase 56-like"/>
    <property type="match status" value="1"/>
</dbReference>
<dbReference type="Gene3D" id="3.40.50.300">
    <property type="entry name" value="P-loop containing nucleotide triphosphate hydrolases"/>
    <property type="match status" value="2"/>
</dbReference>
<dbReference type="InterPro" id="IPR011545">
    <property type="entry name" value="DEAD/DEAH_box_helicase_dom"/>
</dbReference>
<dbReference type="InterPro" id="IPR014001">
    <property type="entry name" value="Helicase_ATP-bd"/>
</dbReference>
<dbReference type="InterPro" id="IPR001650">
    <property type="entry name" value="Helicase_C-like"/>
</dbReference>
<dbReference type="InterPro" id="IPR027417">
    <property type="entry name" value="P-loop_NTPase"/>
</dbReference>
<dbReference type="InterPro" id="IPR014014">
    <property type="entry name" value="RNA_helicase_DEAD_Q_motif"/>
</dbReference>
<dbReference type="PANTHER" id="PTHR47958">
    <property type="entry name" value="ATP-DEPENDENT RNA HELICASE DBP3"/>
    <property type="match status" value="1"/>
</dbReference>
<dbReference type="Pfam" id="PF00270">
    <property type="entry name" value="DEAD"/>
    <property type="match status" value="1"/>
</dbReference>
<dbReference type="Pfam" id="PF00271">
    <property type="entry name" value="Helicase_C"/>
    <property type="match status" value="1"/>
</dbReference>
<dbReference type="SMART" id="SM00487">
    <property type="entry name" value="DEXDc"/>
    <property type="match status" value="1"/>
</dbReference>
<dbReference type="SMART" id="SM00490">
    <property type="entry name" value="HELICc"/>
    <property type="match status" value="1"/>
</dbReference>
<dbReference type="SUPFAM" id="SSF52540">
    <property type="entry name" value="P-loop containing nucleoside triphosphate hydrolases"/>
    <property type="match status" value="1"/>
</dbReference>
<dbReference type="PROSITE" id="PS51192">
    <property type="entry name" value="HELICASE_ATP_BIND_1"/>
    <property type="match status" value="1"/>
</dbReference>
<dbReference type="PROSITE" id="PS51194">
    <property type="entry name" value="HELICASE_CTER"/>
    <property type="match status" value="1"/>
</dbReference>
<dbReference type="PROSITE" id="PS51195">
    <property type="entry name" value="Q_MOTIF"/>
    <property type="match status" value="1"/>
</dbReference>
<evidence type="ECO:0000255" key="1">
    <source>
        <dbReference type="PROSITE-ProRule" id="PRU00541"/>
    </source>
</evidence>
<evidence type="ECO:0000255" key="2">
    <source>
        <dbReference type="PROSITE-ProRule" id="PRU00542"/>
    </source>
</evidence>
<evidence type="ECO:0000256" key="3">
    <source>
        <dbReference type="SAM" id="MobiDB-lite"/>
    </source>
</evidence>
<evidence type="ECO:0000269" key="4">
    <source>
    </source>
</evidence>
<evidence type="ECO:0000269" key="5">
    <source>
    </source>
</evidence>
<evidence type="ECO:0000303" key="6">
    <source>
    </source>
</evidence>
<evidence type="ECO:0000303" key="7">
    <source ref="5"/>
</evidence>
<evidence type="ECO:0000305" key="8"/>
<evidence type="ECO:0000305" key="9">
    <source>
    </source>
</evidence>
<accession>Q56XG6</accession>
<accession>C0Z3C4</accession>
<accession>Q0WWC6</accession>
<accession>Q3E9I7</accession>
<accession>Q56YP8</accession>
<accession>Q93VJ8</accession>
<accession>Q9LFN9</accession>
<accession>Q9ZS06</accession>
<reference key="1">
    <citation type="journal article" date="1999" name="Nucleic Acids Res.">
        <title>The DEAD box RNA helicase family in Arabidopsis thaliana.</title>
        <authorList>
            <person name="Aubourg S."/>
            <person name="Kreis M."/>
            <person name="Lecharny A."/>
        </authorList>
    </citation>
    <scope>NUCLEOTIDE SEQUENCE [MRNA] (ISOFORM 1)</scope>
    <source>
        <strain>cv. Columbia</strain>
    </source>
</reference>
<reference key="2">
    <citation type="journal article" date="2000" name="Nature">
        <title>Sequence and analysis of chromosome 5 of the plant Arabidopsis thaliana.</title>
        <authorList>
            <person name="Tabata S."/>
            <person name="Kaneko T."/>
            <person name="Nakamura Y."/>
            <person name="Kotani H."/>
            <person name="Kato T."/>
            <person name="Asamizu E."/>
            <person name="Miyajima N."/>
            <person name="Sasamoto S."/>
            <person name="Kimura T."/>
            <person name="Hosouchi T."/>
            <person name="Kawashima K."/>
            <person name="Kohara M."/>
            <person name="Matsumoto M."/>
            <person name="Matsuno A."/>
            <person name="Muraki A."/>
            <person name="Nakayama S."/>
            <person name="Nakazaki N."/>
            <person name="Naruo K."/>
            <person name="Okumura S."/>
            <person name="Shinpo S."/>
            <person name="Takeuchi C."/>
            <person name="Wada T."/>
            <person name="Watanabe A."/>
            <person name="Yamada M."/>
            <person name="Yasuda M."/>
            <person name="Sato S."/>
            <person name="de la Bastide M."/>
            <person name="Huang E."/>
            <person name="Spiegel L."/>
            <person name="Gnoj L."/>
            <person name="O'Shaughnessy A."/>
            <person name="Preston R."/>
            <person name="Habermann K."/>
            <person name="Murray J."/>
            <person name="Johnson D."/>
            <person name="Rohlfing T."/>
            <person name="Nelson J."/>
            <person name="Stoneking T."/>
            <person name="Pepin K."/>
            <person name="Spieth J."/>
            <person name="Sekhon M."/>
            <person name="Armstrong J."/>
            <person name="Becker M."/>
            <person name="Belter E."/>
            <person name="Cordum H."/>
            <person name="Cordes M."/>
            <person name="Courtney L."/>
            <person name="Courtney W."/>
            <person name="Dante M."/>
            <person name="Du H."/>
            <person name="Edwards J."/>
            <person name="Fryman J."/>
            <person name="Haakensen B."/>
            <person name="Lamar E."/>
            <person name="Latreille P."/>
            <person name="Leonard S."/>
            <person name="Meyer R."/>
            <person name="Mulvaney E."/>
            <person name="Ozersky P."/>
            <person name="Riley A."/>
            <person name="Strowmatt C."/>
            <person name="Wagner-McPherson C."/>
            <person name="Wollam A."/>
            <person name="Yoakum M."/>
            <person name="Bell M."/>
            <person name="Dedhia N."/>
            <person name="Parnell L."/>
            <person name="Shah R."/>
            <person name="Rodriguez M."/>
            <person name="Hoon See L."/>
            <person name="Vil D."/>
            <person name="Baker J."/>
            <person name="Kirchoff K."/>
            <person name="Toth K."/>
            <person name="King L."/>
            <person name="Bahret A."/>
            <person name="Miller B."/>
            <person name="Marra M.A."/>
            <person name="Martienssen R."/>
            <person name="McCombie W.R."/>
            <person name="Wilson R.K."/>
            <person name="Murphy G."/>
            <person name="Bancroft I."/>
            <person name="Volckaert G."/>
            <person name="Wambutt R."/>
            <person name="Duesterhoeft A."/>
            <person name="Stiekema W."/>
            <person name="Pohl T."/>
            <person name="Entian K.-D."/>
            <person name="Terryn N."/>
            <person name="Hartley N."/>
            <person name="Bent E."/>
            <person name="Johnson S."/>
            <person name="Langham S.-A."/>
            <person name="McCullagh B."/>
            <person name="Robben J."/>
            <person name="Grymonprez B."/>
            <person name="Zimmermann W."/>
            <person name="Ramsperger U."/>
            <person name="Wedler H."/>
            <person name="Balke K."/>
            <person name="Wedler E."/>
            <person name="Peters S."/>
            <person name="van Staveren M."/>
            <person name="Dirkse W."/>
            <person name="Mooijman P."/>
            <person name="Klein Lankhorst R."/>
            <person name="Weitzenegger T."/>
            <person name="Bothe G."/>
            <person name="Rose M."/>
            <person name="Hauf J."/>
            <person name="Berneiser S."/>
            <person name="Hempel S."/>
            <person name="Feldpausch M."/>
            <person name="Lamberth S."/>
            <person name="Villarroel R."/>
            <person name="Gielen J."/>
            <person name="Ardiles W."/>
            <person name="Bents O."/>
            <person name="Lemcke K."/>
            <person name="Kolesov G."/>
            <person name="Mayer K.F.X."/>
            <person name="Rudd S."/>
            <person name="Schoof H."/>
            <person name="Schueller C."/>
            <person name="Zaccaria P."/>
            <person name="Mewes H.-W."/>
            <person name="Bevan M."/>
            <person name="Fransz P.F."/>
        </authorList>
    </citation>
    <scope>NUCLEOTIDE SEQUENCE [LARGE SCALE GENOMIC DNA]</scope>
    <source>
        <strain>cv. Columbia</strain>
    </source>
</reference>
<reference key="3">
    <citation type="journal article" date="2017" name="Plant J.">
        <title>Araport11: a complete reannotation of the Arabidopsis thaliana reference genome.</title>
        <authorList>
            <person name="Cheng C.Y."/>
            <person name="Krishnakumar V."/>
            <person name="Chan A.P."/>
            <person name="Thibaud-Nissen F."/>
            <person name="Schobel S."/>
            <person name="Town C.D."/>
        </authorList>
    </citation>
    <scope>GENOME REANNOTATION</scope>
    <source>
        <strain>cv. Columbia</strain>
    </source>
</reference>
<reference key="4">
    <citation type="journal article" date="2003" name="Science">
        <title>Empirical analysis of transcriptional activity in the Arabidopsis genome.</title>
        <authorList>
            <person name="Yamada K."/>
            <person name="Lim J."/>
            <person name="Dale J.M."/>
            <person name="Chen H."/>
            <person name="Shinn P."/>
            <person name="Palm C.J."/>
            <person name="Southwick A.M."/>
            <person name="Wu H.C."/>
            <person name="Kim C.J."/>
            <person name="Nguyen M."/>
            <person name="Pham P.K."/>
            <person name="Cheuk R.F."/>
            <person name="Karlin-Newmann G."/>
            <person name="Liu S.X."/>
            <person name="Lam B."/>
            <person name="Sakano H."/>
            <person name="Wu T."/>
            <person name="Yu G."/>
            <person name="Miranda M."/>
            <person name="Quach H.L."/>
            <person name="Tripp M."/>
            <person name="Chang C.H."/>
            <person name="Lee J.M."/>
            <person name="Toriumi M.J."/>
            <person name="Chan M.M."/>
            <person name="Tang C.C."/>
            <person name="Onodera C.S."/>
            <person name="Deng J.M."/>
            <person name="Akiyama K."/>
            <person name="Ansari Y."/>
            <person name="Arakawa T."/>
            <person name="Banh J."/>
            <person name="Banno F."/>
            <person name="Bowser L."/>
            <person name="Brooks S.Y."/>
            <person name="Carninci P."/>
            <person name="Chao Q."/>
            <person name="Choy N."/>
            <person name="Enju A."/>
            <person name="Goldsmith A.D."/>
            <person name="Gurjal M."/>
            <person name="Hansen N.F."/>
            <person name="Hayashizaki Y."/>
            <person name="Johnson-Hopson C."/>
            <person name="Hsuan V.W."/>
            <person name="Iida K."/>
            <person name="Karnes M."/>
            <person name="Khan S."/>
            <person name="Koesema E."/>
            <person name="Ishida J."/>
            <person name="Jiang P.X."/>
            <person name="Jones T."/>
            <person name="Kawai J."/>
            <person name="Kamiya A."/>
            <person name="Meyers C."/>
            <person name="Nakajima M."/>
            <person name="Narusaka M."/>
            <person name="Seki M."/>
            <person name="Sakurai T."/>
            <person name="Satou M."/>
            <person name="Tamse R."/>
            <person name="Vaysberg M."/>
            <person name="Wallender E.K."/>
            <person name="Wong C."/>
            <person name="Yamamura Y."/>
            <person name="Yuan S."/>
            <person name="Shinozaki K."/>
            <person name="Davis R.W."/>
            <person name="Theologis A."/>
            <person name="Ecker J.R."/>
        </authorList>
    </citation>
    <scope>NUCLEOTIDE SEQUENCE [LARGE SCALE MRNA] (ISOFORM 1)</scope>
    <source>
        <strain>cv. Columbia</strain>
    </source>
</reference>
<reference key="5">
    <citation type="submission" date="2006-07" db="EMBL/GenBank/DDBJ databases">
        <title>Large-scale analysis of RIKEN Arabidopsis full-length (RAFL) cDNAs.</title>
        <authorList>
            <person name="Totoki Y."/>
            <person name="Seki M."/>
            <person name="Ishida J."/>
            <person name="Nakajima M."/>
            <person name="Enju A."/>
            <person name="Kamiya A."/>
            <person name="Narusaka M."/>
            <person name="Shin-i T."/>
            <person name="Nakagawa M."/>
            <person name="Sakamoto N."/>
            <person name="Oishi K."/>
            <person name="Kohara Y."/>
            <person name="Kobayashi M."/>
            <person name="Toyoda A."/>
            <person name="Sakaki Y."/>
            <person name="Sakurai T."/>
            <person name="Iida K."/>
            <person name="Akiyama K."/>
            <person name="Satou M."/>
            <person name="Toyoda T."/>
            <person name="Konagaya A."/>
            <person name="Carninci P."/>
            <person name="Kawai J."/>
            <person name="Hayashizaki Y."/>
            <person name="Shinozaki K."/>
        </authorList>
    </citation>
    <scope>NUCLEOTIDE SEQUENCE [LARGE SCALE MRNA] (ISOFORMS 1; 2 AND 3)</scope>
    <source>
        <strain>cv. Columbia</strain>
    </source>
</reference>
<reference key="6">
    <citation type="journal article" date="2009" name="DNA Res.">
        <title>Analysis of multiple occurrences of alternative splicing events in Arabidopsis thaliana using novel sequenced full-length cDNAs.</title>
        <authorList>
            <person name="Iida K."/>
            <person name="Fukami-Kobayashi K."/>
            <person name="Toyoda A."/>
            <person name="Sakaki Y."/>
            <person name="Kobayashi M."/>
            <person name="Seki M."/>
            <person name="Shinozaki K."/>
        </authorList>
    </citation>
    <scope>NUCLEOTIDE SEQUENCE [LARGE SCALE MRNA] (ISOFORM 3)</scope>
    <source>
        <strain>cv. Columbia</strain>
    </source>
</reference>
<reference key="7">
    <citation type="journal article" date="2004" name="Plant Biotechnol. J.">
        <title>DEAD-box RNA helicases in Arabidopsis thaliana: establishing a link between quantitative expression, gene structure and evolution of a family of genes.</title>
        <authorList>
            <person name="Mingam A."/>
            <person name="Toffano-Nioche C."/>
            <person name="Brunaud V."/>
            <person name="Boudet N."/>
            <person name="Kreis M."/>
            <person name="Lecharny A."/>
        </authorList>
    </citation>
    <scope>GENE FAMILY</scope>
    <scope>NOMENCLATURE</scope>
</reference>
<reference key="8">
    <citation type="journal article" date="2012" name="Plant Signal. Behav.">
        <title>The THO/TREX complex functions in disease resistance in Arabidopsis.</title>
        <authorList>
            <person name="Pan H."/>
            <person name="Liu S."/>
            <person name="Tang D."/>
        </authorList>
    </citation>
    <scope>SUBCELLULAR LOCATION</scope>
</reference>
<reference key="9">
    <citation type="journal article" date="2013" name="PLoS ONE">
        <title>Genome-wide comparative in silico analysis of the RNA helicase gene family in Zea mays and Glycine max: a comparison with Arabidopsis and Oryza sativa.</title>
        <authorList>
            <person name="Xu R."/>
            <person name="Zhang S."/>
            <person name="Huang J."/>
            <person name="Zheng C."/>
        </authorList>
    </citation>
    <scope>GENE FAMILY</scope>
</reference>
<reference key="10">
    <citation type="journal article" date="2013" name="PLoS ONE">
        <title>Arabidopsis DEAD-box RNA helicase UAP56 interacts with both RNA and DNA as well as with mRNA export factors.</title>
        <authorList>
            <person name="Kammel C."/>
            <person name="Thomaier M."/>
            <person name="Sorensen B.B."/>
            <person name="Schubert T."/>
            <person name="Langst G."/>
            <person name="Grasser M."/>
            <person name="Grasser K.D."/>
        </authorList>
    </citation>
    <scope>FUNCTION</scope>
    <scope>CATALYTIC ACTIVITY</scope>
    <scope>SUBCELLULAR LOCATION</scope>
    <scope>INTERACTION WITH ALY2 AND MOS11</scope>
</reference>
<organism>
    <name type="scientific">Arabidopsis thaliana</name>
    <name type="common">Mouse-ear cress</name>
    <dbReference type="NCBI Taxonomy" id="3702"/>
    <lineage>
        <taxon>Eukaryota</taxon>
        <taxon>Viridiplantae</taxon>
        <taxon>Streptophyta</taxon>
        <taxon>Embryophyta</taxon>
        <taxon>Tracheophyta</taxon>
        <taxon>Spermatophyta</taxon>
        <taxon>Magnoliopsida</taxon>
        <taxon>eudicotyledons</taxon>
        <taxon>Gunneridae</taxon>
        <taxon>Pentapetalae</taxon>
        <taxon>rosids</taxon>
        <taxon>malvids</taxon>
        <taxon>Brassicales</taxon>
        <taxon>Brassicaceae</taxon>
        <taxon>Camelineae</taxon>
        <taxon>Arabidopsis</taxon>
    </lineage>
</organism>